<accession>Q86A14</accession>
<accession>Q1ZXM9</accession>
<protein>
    <recommendedName>
        <fullName>Probable splicing factor 3A subunit 1</fullName>
    </recommendedName>
</protein>
<dbReference type="EMBL" id="AAFI02000008">
    <property type="protein sequence ID" value="EAS66956.1"/>
    <property type="molecule type" value="Genomic_DNA"/>
</dbReference>
<dbReference type="RefSeq" id="XP_001134622.1">
    <property type="nucleotide sequence ID" value="XM_001134622.1"/>
</dbReference>
<dbReference type="SMR" id="Q86A14"/>
<dbReference type="FunCoup" id="Q86A14">
    <property type="interactions" value="939"/>
</dbReference>
<dbReference type="STRING" id="44689.Q86A14"/>
<dbReference type="GlyGen" id="Q86A14">
    <property type="glycosylation" value="1 site"/>
</dbReference>
<dbReference type="PaxDb" id="44689-DDB0233180"/>
<dbReference type="EnsemblProtists" id="EAS66956">
    <property type="protein sequence ID" value="EAS66956"/>
    <property type="gene ID" value="DDB_G0272676"/>
</dbReference>
<dbReference type="GeneID" id="8618597"/>
<dbReference type="KEGG" id="ddi:DDB_G0272676"/>
<dbReference type="dictyBase" id="DDB_G0272676">
    <property type="gene designation" value="sf3a1"/>
</dbReference>
<dbReference type="VEuPathDB" id="AmoebaDB:DDB_G0272676"/>
<dbReference type="eggNOG" id="KOG0007">
    <property type="taxonomic scope" value="Eukaryota"/>
</dbReference>
<dbReference type="HOGENOM" id="CLU_013259_1_0_1"/>
<dbReference type="InParanoid" id="Q86A14"/>
<dbReference type="OMA" id="HAYYRHR"/>
<dbReference type="PhylomeDB" id="Q86A14"/>
<dbReference type="PRO" id="PR:Q86A14"/>
<dbReference type="Proteomes" id="UP000002195">
    <property type="component" value="Chromosome 2"/>
</dbReference>
<dbReference type="GO" id="GO:0071013">
    <property type="term" value="C:catalytic step 2 spliceosome"/>
    <property type="evidence" value="ECO:0000318"/>
    <property type="project" value="GO_Central"/>
</dbReference>
<dbReference type="GO" id="GO:0005681">
    <property type="term" value="C:spliceosomal complex"/>
    <property type="evidence" value="ECO:0000250"/>
    <property type="project" value="dictyBase"/>
</dbReference>
<dbReference type="GO" id="GO:0005686">
    <property type="term" value="C:U2 snRNP"/>
    <property type="evidence" value="ECO:0000318"/>
    <property type="project" value="GO_Central"/>
</dbReference>
<dbReference type="GO" id="GO:0071004">
    <property type="term" value="C:U2-type prespliceosome"/>
    <property type="evidence" value="ECO:0000318"/>
    <property type="project" value="GO_Central"/>
</dbReference>
<dbReference type="GO" id="GO:0005684">
    <property type="term" value="C:U2-type spliceosomal complex"/>
    <property type="evidence" value="ECO:0000250"/>
    <property type="project" value="UniProtKB"/>
</dbReference>
<dbReference type="GO" id="GO:0003723">
    <property type="term" value="F:RNA binding"/>
    <property type="evidence" value="ECO:0000250"/>
    <property type="project" value="UniProtKB"/>
</dbReference>
<dbReference type="GO" id="GO:0045292">
    <property type="term" value="P:mRNA cis splicing, via spliceosome"/>
    <property type="evidence" value="ECO:0007669"/>
    <property type="project" value="InterPro"/>
</dbReference>
<dbReference type="GO" id="GO:0000398">
    <property type="term" value="P:mRNA splicing, via spliceosome"/>
    <property type="evidence" value="ECO:0000250"/>
    <property type="project" value="UniProtKB"/>
</dbReference>
<dbReference type="CDD" id="cd01800">
    <property type="entry name" value="Ubl_SF3a120"/>
    <property type="match status" value="1"/>
</dbReference>
<dbReference type="FunFam" id="3.10.20.90:FF:000524">
    <property type="entry name" value="Probable splicing factor 3A subunit 1"/>
    <property type="match status" value="1"/>
</dbReference>
<dbReference type="FunFam" id="1.10.10.790:FF:000001">
    <property type="entry name" value="Splicing factor 3a, subunit 1"/>
    <property type="match status" value="1"/>
</dbReference>
<dbReference type="Gene3D" id="3.10.20.90">
    <property type="entry name" value="Phosphatidylinositol 3-kinase Catalytic Subunit, Chain A, domain 1"/>
    <property type="match status" value="1"/>
</dbReference>
<dbReference type="Gene3D" id="1.10.10.790">
    <property type="entry name" value="Surp module"/>
    <property type="match status" value="2"/>
</dbReference>
<dbReference type="InterPro" id="IPR045146">
    <property type="entry name" value="SF3A1"/>
</dbReference>
<dbReference type="InterPro" id="IPR022030">
    <property type="entry name" value="SF3A1_dom"/>
</dbReference>
<dbReference type="InterPro" id="IPR035563">
    <property type="entry name" value="SF3As1_ubi"/>
</dbReference>
<dbReference type="InterPro" id="IPR000061">
    <property type="entry name" value="Surp"/>
</dbReference>
<dbReference type="InterPro" id="IPR035967">
    <property type="entry name" value="SWAP/Surp_sf"/>
</dbReference>
<dbReference type="InterPro" id="IPR000626">
    <property type="entry name" value="Ubiquitin-like_dom"/>
</dbReference>
<dbReference type="InterPro" id="IPR029071">
    <property type="entry name" value="Ubiquitin-like_domsf"/>
</dbReference>
<dbReference type="PANTHER" id="PTHR15316">
    <property type="entry name" value="SPLICEOSOME ASSOCIATED PROTEIN 114/SWAP SPLICING FACTOR-RELATED"/>
    <property type="match status" value="1"/>
</dbReference>
<dbReference type="PANTHER" id="PTHR15316:SF1">
    <property type="entry name" value="SPLICING FACTOR 3A SUBUNIT 1"/>
    <property type="match status" value="1"/>
</dbReference>
<dbReference type="Pfam" id="PF12230">
    <property type="entry name" value="PRP21_like_P"/>
    <property type="match status" value="1"/>
</dbReference>
<dbReference type="Pfam" id="PF01805">
    <property type="entry name" value="Surp"/>
    <property type="match status" value="2"/>
</dbReference>
<dbReference type="Pfam" id="PF00240">
    <property type="entry name" value="ubiquitin"/>
    <property type="match status" value="1"/>
</dbReference>
<dbReference type="SMART" id="SM00648">
    <property type="entry name" value="SWAP"/>
    <property type="match status" value="2"/>
</dbReference>
<dbReference type="SMART" id="SM00213">
    <property type="entry name" value="UBQ"/>
    <property type="match status" value="1"/>
</dbReference>
<dbReference type="SUPFAM" id="SSF109905">
    <property type="entry name" value="Surp module (SWAP domain)"/>
    <property type="match status" value="2"/>
</dbReference>
<dbReference type="SUPFAM" id="SSF54236">
    <property type="entry name" value="Ubiquitin-like"/>
    <property type="match status" value="1"/>
</dbReference>
<dbReference type="PROSITE" id="PS50128">
    <property type="entry name" value="SURP"/>
    <property type="match status" value="2"/>
</dbReference>
<dbReference type="PROSITE" id="PS50053">
    <property type="entry name" value="UBIQUITIN_2"/>
    <property type="match status" value="1"/>
</dbReference>
<gene>
    <name type="primary">sf3a1</name>
    <name type="ORF">DDB_G0272676</name>
</gene>
<organism>
    <name type="scientific">Dictyostelium discoideum</name>
    <name type="common">Social amoeba</name>
    <dbReference type="NCBI Taxonomy" id="44689"/>
    <lineage>
        <taxon>Eukaryota</taxon>
        <taxon>Amoebozoa</taxon>
        <taxon>Evosea</taxon>
        <taxon>Eumycetozoa</taxon>
        <taxon>Dictyostelia</taxon>
        <taxon>Dictyosteliales</taxon>
        <taxon>Dictyosteliaceae</taxon>
        <taxon>Dictyostelium</taxon>
    </lineage>
</organism>
<keyword id="KW-0175">Coiled coil</keyword>
<keyword id="KW-0507">mRNA processing</keyword>
<keyword id="KW-0508">mRNA splicing</keyword>
<keyword id="KW-0539">Nucleus</keyword>
<keyword id="KW-1185">Reference proteome</keyword>
<keyword id="KW-0677">Repeat</keyword>
<keyword id="KW-0747">Spliceosome</keyword>
<comment type="function">
    <text evidence="1">Involved in pre-mRNA splicing as a component of the splicing factor SF3A complex that contributes to the assembly of the 17S U2 snRNP, and the subsequent assembly of the spliceosome.</text>
</comment>
<comment type="subunit">
    <text evidence="1">Component of splicing factor SF3A which associates with the splicing factor SF3B and a 12S RNA unit to form the mature 17S U2 small nuclear ribonucleoprotein complex (17S U2 snRNP). Identified in the spliceosome 'E' complex, a precursor of the spliceosome 'A' complex. Identified in the spliceosome 'A' and 'B' complexes. Identified in the spliceosome 'C' complex.</text>
</comment>
<comment type="subcellular location">
    <subcellularLocation>
        <location evidence="1">Nucleus</location>
    </subcellularLocation>
</comment>
<comment type="similarity">
    <text evidence="5">Belongs to the SF3A1 family.</text>
</comment>
<feature type="chain" id="PRO_0000327906" description="Probable splicing factor 3A subunit 1">
    <location>
        <begin position="1"/>
        <end position="760"/>
    </location>
</feature>
<feature type="repeat" description="SURP motif 1">
    <location>
        <begin position="16"/>
        <end position="58"/>
    </location>
</feature>
<feature type="repeat" description="SURP motif 2">
    <location>
        <begin position="183"/>
        <end position="225"/>
    </location>
</feature>
<feature type="domain" description="Ubiquitin-like" evidence="3">
    <location>
        <begin position="680"/>
        <end position="757"/>
    </location>
</feature>
<feature type="region of interest" description="Disordered" evidence="4">
    <location>
        <begin position="77"/>
        <end position="165"/>
    </location>
</feature>
<feature type="region of interest" description="Disordered" evidence="4">
    <location>
        <begin position="309"/>
        <end position="348"/>
    </location>
</feature>
<feature type="region of interest" description="Disordered" evidence="4">
    <location>
        <begin position="360"/>
        <end position="393"/>
    </location>
</feature>
<feature type="region of interest" description="Disordered" evidence="4">
    <location>
        <begin position="442"/>
        <end position="464"/>
    </location>
</feature>
<feature type="region of interest" description="Disordered" evidence="4">
    <location>
        <begin position="487"/>
        <end position="509"/>
    </location>
</feature>
<feature type="region of interest" description="Disordered" evidence="4">
    <location>
        <begin position="544"/>
        <end position="583"/>
    </location>
</feature>
<feature type="region of interest" description="Disordered" evidence="4">
    <location>
        <begin position="624"/>
        <end position="657"/>
    </location>
</feature>
<feature type="region of interest" description="Required and sufficient for nuclear import" evidence="1">
    <location>
        <begin position="655"/>
        <end position="677"/>
    </location>
</feature>
<feature type="coiled-coil region" evidence="2">
    <location>
        <begin position="259"/>
        <end position="290"/>
    </location>
</feature>
<feature type="compositionally biased region" description="Low complexity" evidence="4">
    <location>
        <begin position="77"/>
        <end position="147"/>
    </location>
</feature>
<feature type="compositionally biased region" description="Acidic residues" evidence="4">
    <location>
        <begin position="360"/>
        <end position="373"/>
    </location>
</feature>
<feature type="compositionally biased region" description="Low complexity" evidence="4">
    <location>
        <begin position="374"/>
        <end position="385"/>
    </location>
</feature>
<feature type="compositionally biased region" description="Low complexity" evidence="4">
    <location>
        <begin position="454"/>
        <end position="464"/>
    </location>
</feature>
<feature type="compositionally biased region" description="Basic and acidic residues" evidence="4">
    <location>
        <begin position="487"/>
        <end position="496"/>
    </location>
</feature>
<feature type="compositionally biased region" description="Low complexity" evidence="4">
    <location>
        <begin position="544"/>
        <end position="557"/>
    </location>
</feature>
<feature type="compositionally biased region" description="Low complexity" evidence="4">
    <location>
        <begin position="629"/>
        <end position="649"/>
    </location>
</feature>
<reference key="1">
    <citation type="journal article" date="2002" name="Nature">
        <title>Sequence and analysis of chromosome 2 of Dictyostelium discoideum.</title>
        <authorList>
            <person name="Gloeckner G."/>
            <person name="Eichinger L."/>
            <person name="Szafranski K."/>
            <person name="Pachebat J.A."/>
            <person name="Bankier A.T."/>
            <person name="Dear P.H."/>
            <person name="Lehmann R."/>
            <person name="Baumgart C."/>
            <person name="Parra G."/>
            <person name="Abril J.F."/>
            <person name="Guigo R."/>
            <person name="Kumpf K."/>
            <person name="Tunggal B."/>
            <person name="Cox E.C."/>
            <person name="Quail M.A."/>
            <person name="Platzer M."/>
            <person name="Rosenthal A."/>
            <person name="Noegel A.A."/>
        </authorList>
    </citation>
    <scope>NUCLEOTIDE SEQUENCE [LARGE SCALE GENOMIC DNA]</scope>
    <source>
        <strain>AX4</strain>
    </source>
</reference>
<reference key="2">
    <citation type="journal article" date="2005" name="Nature">
        <title>The genome of the social amoeba Dictyostelium discoideum.</title>
        <authorList>
            <person name="Eichinger L."/>
            <person name="Pachebat J.A."/>
            <person name="Gloeckner G."/>
            <person name="Rajandream M.A."/>
            <person name="Sucgang R."/>
            <person name="Berriman M."/>
            <person name="Song J."/>
            <person name="Olsen R."/>
            <person name="Szafranski K."/>
            <person name="Xu Q."/>
            <person name="Tunggal B."/>
            <person name="Kummerfeld S."/>
            <person name="Madera M."/>
            <person name="Konfortov B.A."/>
            <person name="Rivero F."/>
            <person name="Bankier A.T."/>
            <person name="Lehmann R."/>
            <person name="Hamlin N."/>
            <person name="Davies R."/>
            <person name="Gaudet P."/>
            <person name="Fey P."/>
            <person name="Pilcher K."/>
            <person name="Chen G."/>
            <person name="Saunders D."/>
            <person name="Sodergren E.J."/>
            <person name="Davis P."/>
            <person name="Kerhornou A."/>
            <person name="Nie X."/>
            <person name="Hall N."/>
            <person name="Anjard C."/>
            <person name="Hemphill L."/>
            <person name="Bason N."/>
            <person name="Farbrother P."/>
            <person name="Desany B."/>
            <person name="Just E."/>
            <person name="Morio T."/>
            <person name="Rost R."/>
            <person name="Churcher C.M."/>
            <person name="Cooper J."/>
            <person name="Haydock S."/>
            <person name="van Driessche N."/>
            <person name="Cronin A."/>
            <person name="Goodhead I."/>
            <person name="Muzny D.M."/>
            <person name="Mourier T."/>
            <person name="Pain A."/>
            <person name="Lu M."/>
            <person name="Harper D."/>
            <person name="Lindsay R."/>
            <person name="Hauser H."/>
            <person name="James K.D."/>
            <person name="Quiles M."/>
            <person name="Madan Babu M."/>
            <person name="Saito T."/>
            <person name="Buchrieser C."/>
            <person name="Wardroper A."/>
            <person name="Felder M."/>
            <person name="Thangavelu M."/>
            <person name="Johnson D."/>
            <person name="Knights A."/>
            <person name="Loulseged H."/>
            <person name="Mungall K.L."/>
            <person name="Oliver K."/>
            <person name="Price C."/>
            <person name="Quail M.A."/>
            <person name="Urushihara H."/>
            <person name="Hernandez J."/>
            <person name="Rabbinowitsch E."/>
            <person name="Steffen D."/>
            <person name="Sanders M."/>
            <person name="Ma J."/>
            <person name="Kohara Y."/>
            <person name="Sharp S."/>
            <person name="Simmonds M.N."/>
            <person name="Spiegler S."/>
            <person name="Tivey A."/>
            <person name="Sugano S."/>
            <person name="White B."/>
            <person name="Walker D."/>
            <person name="Woodward J.R."/>
            <person name="Winckler T."/>
            <person name="Tanaka Y."/>
            <person name="Shaulsky G."/>
            <person name="Schleicher M."/>
            <person name="Weinstock G.M."/>
            <person name="Rosenthal A."/>
            <person name="Cox E.C."/>
            <person name="Chisholm R.L."/>
            <person name="Gibbs R.A."/>
            <person name="Loomis W.F."/>
            <person name="Platzer M."/>
            <person name="Kay R.R."/>
            <person name="Williams J.G."/>
            <person name="Dear P.H."/>
            <person name="Noegel A.A."/>
            <person name="Barrell B.G."/>
            <person name="Kuspa A."/>
        </authorList>
    </citation>
    <scope>NUCLEOTIDE SEQUENCE [LARGE SCALE GENOMIC DNA]</scope>
    <source>
        <strain>AX4</strain>
    </source>
</reference>
<name>SF3A1_DICDI</name>
<proteinExistence type="inferred from homology"/>
<sequence>MANEIITPTEGELKTIIDKTAAYAAKLGESFENKVKQREGHNAKFNFMKEGDQYYPYYRNKIVENKAKIQADAAAAAAAANPKTPSTTTTTTTTTTATTPLPTATATTTSPTPTTSSTIVPVPQTNSTQQLQQQQQQQQQTTPVFEKPQPPPPPPPKKEPTQPDPLLYILDVPDFMTPLELDTIRLTAQFIAKNGDSFFMELASREVKNSQFDFLKPTNHLYEWFRALVESYAQIIYPPQGIKEQLKSNYFSNKQTILERAMNRCEYNQLKEIEEQKKEEREDEEKTIIASIDWHDFVIVDTIEFNEDDLDDLPQPRTFDQLIAGDTPFGGSDFDNDGHGSNGKGGQDMEMEMDMEMEMDDEDNNNNEDEIEESSLSSTNTTGNLPPKDQSKLKIVKDYQKSNSSVKSNAPTKLTQLCQFCKQEIPLDEMQEHMRIELIQKQQRDSRLGGGGSSNNNNNLTNTLTQDDDIARNLQSFASKRVDIFGETESSKKQDEQPTQAPKVIWDGHSGSIPRVQAAQQAAQLAAQQAAQQKAAAIAAQQASQQQASQQQQQQLQPPQPIGIHHHPQRHLPPGMMPPGMMPPGMMPPGMMPPGMVPPPPFGMIPPGMVPPPPPGLMIPTAPPGLMIPPTQQQQLPPQTNTSPSSSSSIKVEEPQSKKLKIDDVLIPESVWLQNNPNPVNLTVEMADKSNIYQITLQPTDSISLLKEKIKELNGMPTNKQKLQAPGLSILKDTCSIAFYNLKSLAIVTCGQKKKGGKKK</sequence>
<evidence type="ECO:0000250" key="1">
    <source>
        <dbReference type="UniProtKB" id="Q15459"/>
    </source>
</evidence>
<evidence type="ECO:0000255" key="2"/>
<evidence type="ECO:0000255" key="3">
    <source>
        <dbReference type="PROSITE-ProRule" id="PRU00214"/>
    </source>
</evidence>
<evidence type="ECO:0000256" key="4">
    <source>
        <dbReference type="SAM" id="MobiDB-lite"/>
    </source>
</evidence>
<evidence type="ECO:0000305" key="5"/>